<proteinExistence type="evidence at protein level"/>
<organism>
    <name type="scientific">Mus musculus</name>
    <name type="common">Mouse</name>
    <dbReference type="NCBI Taxonomy" id="10090"/>
    <lineage>
        <taxon>Eukaryota</taxon>
        <taxon>Metazoa</taxon>
        <taxon>Chordata</taxon>
        <taxon>Craniata</taxon>
        <taxon>Vertebrata</taxon>
        <taxon>Euteleostomi</taxon>
        <taxon>Mammalia</taxon>
        <taxon>Eutheria</taxon>
        <taxon>Euarchontoglires</taxon>
        <taxon>Glires</taxon>
        <taxon>Rodentia</taxon>
        <taxon>Myomorpha</taxon>
        <taxon>Muroidea</taxon>
        <taxon>Muridae</taxon>
        <taxon>Murinae</taxon>
        <taxon>Mus</taxon>
        <taxon>Mus</taxon>
    </lineage>
</organism>
<sequence length="584" mass="62298">MPQLGGGRGGAGGGGGGSGAGATSGGDDLGANDELIPFQDEGGEEQEPSSDTASAQRDLDEVKSSLVNESENQSSSSDSEAERRPQPARDAFQKPRDYFAEVRRPQDGAFFKGGAYPGYPFLMIPDLSSPYLSNGPLSPGGARTYLQMKWPLLDVPSSATVKDTRSPSPAHLSNKVPVVQHPHHMHPLTPLITYSNDHFSPASPPTHLSPEIDPKTGIPRPPHPSELSPYYPLSPGAVGQIPHPLGWLVPQQGQPMYSLPPGGFRHPYPALAMNASMSSLVSSRFPHMVAPAHPGLPTSGIPHPAIVSPIVKQEPAAPSLSPAVSAKSPVTVKKEEEKKPHVKKPLNAFMLYMKEMRAKVVAECTLKESAAINQILGRKWHNLSREEQAKYYELARKERQLHAQLYPTWSARDNYGKKKKRKREKQLSQTQSQQQIQEAEGALASKSKKPCIQYLPPEKPCDSPASSHGSALDSPATPSAALASPAAPAATHSEQAQPLSLTTKPEARAQLALHSAAFLSAKAAASNSSQMGSQPPLLSRPLPLGSMPAALLTSPPTFPATLHAHQALPVLQAQPLSLVTKSAH</sequence>
<protein>
    <recommendedName>
        <fullName>Transcription factor 7-like 1</fullName>
    </recommendedName>
    <alternativeName>
        <fullName>HMG box transcription factor 3</fullName>
        <shortName>TCF-3</shortName>
        <shortName>mTCF-3</shortName>
    </alternativeName>
</protein>
<accession>Q9Z1J1</accession>
<accession>O70450</accession>
<accession>O70573</accession>
<feature type="chain" id="PRO_0000048615" description="Transcription factor 7-like 1">
    <location>
        <begin position="1"/>
        <end position="584"/>
    </location>
</feature>
<feature type="DNA-binding region" description="HMG box" evidence="4">
    <location>
        <begin position="342"/>
        <end position="410"/>
    </location>
</feature>
<feature type="region of interest" description="Disordered" evidence="5">
    <location>
        <begin position="1"/>
        <end position="99"/>
    </location>
</feature>
<feature type="region of interest" description="CTNNB1-binding" evidence="1">
    <location>
        <begin position="1"/>
        <end position="71"/>
    </location>
</feature>
<feature type="region of interest" description="Disordered" evidence="5">
    <location>
        <begin position="159"/>
        <end position="179"/>
    </location>
</feature>
<feature type="region of interest" description="Disordered" evidence="5">
    <location>
        <begin position="194"/>
        <end position="231"/>
    </location>
</feature>
<feature type="region of interest" description="Disordered" evidence="5">
    <location>
        <begin position="412"/>
        <end position="501"/>
    </location>
</feature>
<feature type="short sequence motif" description="Nuclear localization signal" evidence="3">
    <location>
        <begin position="417"/>
        <end position="423"/>
    </location>
</feature>
<feature type="compositionally biased region" description="Gly residues" evidence="5">
    <location>
        <begin position="1"/>
        <end position="28"/>
    </location>
</feature>
<feature type="compositionally biased region" description="Low complexity" evidence="5">
    <location>
        <begin position="64"/>
        <end position="78"/>
    </location>
</feature>
<feature type="compositionally biased region" description="Basic and acidic residues" evidence="5">
    <location>
        <begin position="80"/>
        <end position="99"/>
    </location>
</feature>
<feature type="compositionally biased region" description="Low complexity" evidence="5">
    <location>
        <begin position="427"/>
        <end position="437"/>
    </location>
</feature>
<feature type="compositionally biased region" description="Low complexity" evidence="5">
    <location>
        <begin position="470"/>
        <end position="491"/>
    </location>
</feature>
<feature type="compositionally biased region" description="Polar residues" evidence="5">
    <location>
        <begin position="492"/>
        <end position="501"/>
    </location>
</feature>
<feature type="mutagenesis site" description="Abolishes DNA-binding and transactivator/repressor activity; when associated with I-407." evidence="7">
    <original>L</original>
    <variation>P</variation>
    <location>
        <position position="383"/>
    </location>
</feature>
<feature type="mutagenesis site" description="Abolishes DNA-binding and transactivator/repressor activity; when associated with P-383." evidence="7">
    <original>P</original>
    <variation>I</variation>
    <location>
        <position position="407"/>
    </location>
</feature>
<feature type="sequence conflict" description="In Ref. 2; CAA11201." evidence="9" ref="2">
    <original>G</original>
    <variation>P</variation>
    <location>
        <position position="114"/>
    </location>
</feature>
<feature type="sequence conflict" description="In Ref. 2; CAA11201." evidence="9" ref="2">
    <original>I</original>
    <variation>M</variation>
    <location>
        <position position="301"/>
    </location>
</feature>
<feature type="sequence conflict" description="In Ref. 2; CAA11201." evidence="9" ref="2">
    <original>QL</original>
    <variation>HV</variation>
    <location>
        <begin position="404"/>
        <end position="405"/>
    </location>
</feature>
<feature type="sequence conflict" description="In Ref. 2; CAA11201." evidence="9" ref="2">
    <original>S</original>
    <variation>I</variation>
    <location>
        <position position="463"/>
    </location>
</feature>
<feature type="sequence conflict" description="In Ref. 2 and 3." evidence="9" ref="2 3">
    <original>A</original>
    <variation>T</variation>
    <location>
        <position position="471"/>
    </location>
</feature>
<gene>
    <name type="primary">Tcf7l1</name>
    <name type="synonym">Tcf3</name>
</gene>
<dbReference type="EMBL" id="AJ223069">
    <property type="protein sequence ID" value="CAA11070.1"/>
    <property type="molecule type" value="mRNA"/>
</dbReference>
<dbReference type="EMBL" id="AJ223233">
    <property type="protein sequence ID" value="CAA11201.1"/>
    <property type="molecule type" value="mRNA"/>
</dbReference>
<dbReference type="EMBL" id="AF057691">
    <property type="protein sequence ID" value="AAC13696.1"/>
    <property type="molecule type" value="mRNA"/>
</dbReference>
<dbReference type="RefSeq" id="NP_033358.2">
    <property type="nucleotide sequence ID" value="NM_009332.3"/>
</dbReference>
<dbReference type="SMR" id="Q9Z1J1"/>
<dbReference type="BioGRID" id="204008">
    <property type="interactions" value="3"/>
</dbReference>
<dbReference type="DIP" id="DIP-49605N"/>
<dbReference type="FunCoup" id="Q9Z1J1">
    <property type="interactions" value="2414"/>
</dbReference>
<dbReference type="IntAct" id="Q9Z1J1">
    <property type="interactions" value="5"/>
</dbReference>
<dbReference type="STRING" id="10090.ENSMUSP00000109687"/>
<dbReference type="GlyGen" id="Q9Z1J1">
    <property type="glycosylation" value="1 site"/>
</dbReference>
<dbReference type="iPTMnet" id="Q9Z1J1"/>
<dbReference type="PhosphoSitePlus" id="Q9Z1J1"/>
<dbReference type="jPOST" id="Q9Z1J1"/>
<dbReference type="PaxDb" id="10090-ENSMUSP00000109687"/>
<dbReference type="ProteomicsDB" id="263296"/>
<dbReference type="Pumba" id="Q9Z1J1"/>
<dbReference type="DNASU" id="21415"/>
<dbReference type="GeneID" id="21415"/>
<dbReference type="KEGG" id="mmu:21415"/>
<dbReference type="AGR" id="MGI:1202876"/>
<dbReference type="CTD" id="83439"/>
<dbReference type="MGI" id="MGI:1202876">
    <property type="gene designation" value="Tcf7l1"/>
</dbReference>
<dbReference type="eggNOG" id="KOG3248">
    <property type="taxonomic scope" value="Eukaryota"/>
</dbReference>
<dbReference type="InParanoid" id="Q9Z1J1"/>
<dbReference type="OrthoDB" id="2307332at2759"/>
<dbReference type="Reactome" id="R-MMU-201722">
    <property type="pathway name" value="Formation of the beta-catenin:TCF transactivating complex"/>
</dbReference>
<dbReference type="Reactome" id="R-MMU-3769402">
    <property type="pathway name" value="Deactivation of the beta-catenin transactivating complex"/>
</dbReference>
<dbReference type="Reactome" id="R-MMU-4086398">
    <property type="pathway name" value="Ca2+ pathway"/>
</dbReference>
<dbReference type="Reactome" id="R-MMU-4641265">
    <property type="pathway name" value="Repression of WNT target genes"/>
</dbReference>
<dbReference type="Reactome" id="R-MMU-8951430">
    <property type="pathway name" value="RUNX3 regulates WNT signaling"/>
</dbReference>
<dbReference type="Reactome" id="R-MMU-9825892">
    <property type="pathway name" value="Regulation of MITF-M-dependent genes involved in cell cycle and proliferation"/>
</dbReference>
<dbReference type="BioGRID-ORCS" id="21415">
    <property type="hits" value="3 hits in 79 CRISPR screens"/>
</dbReference>
<dbReference type="ChiTaRS" id="Tcf7l1">
    <property type="organism name" value="mouse"/>
</dbReference>
<dbReference type="PRO" id="PR:Q9Z1J1"/>
<dbReference type="Proteomes" id="UP000000589">
    <property type="component" value="Unplaced"/>
</dbReference>
<dbReference type="RNAct" id="Q9Z1J1">
    <property type="molecule type" value="protein"/>
</dbReference>
<dbReference type="GO" id="GO:0005634">
    <property type="term" value="C:nucleus"/>
    <property type="evidence" value="ECO:0000314"/>
    <property type="project" value="MGI"/>
</dbReference>
<dbReference type="GO" id="GO:0008013">
    <property type="term" value="F:beta-catenin binding"/>
    <property type="evidence" value="ECO:0000353"/>
    <property type="project" value="MGI"/>
</dbReference>
<dbReference type="GO" id="GO:0003682">
    <property type="term" value="F:chromatin binding"/>
    <property type="evidence" value="ECO:0000314"/>
    <property type="project" value="MGI"/>
</dbReference>
<dbReference type="GO" id="GO:0003677">
    <property type="term" value="F:DNA binding"/>
    <property type="evidence" value="ECO:0000314"/>
    <property type="project" value="MGI"/>
</dbReference>
<dbReference type="GO" id="GO:0003700">
    <property type="term" value="F:DNA-binding transcription factor activity"/>
    <property type="evidence" value="ECO:0000314"/>
    <property type="project" value="MGI"/>
</dbReference>
<dbReference type="GO" id="GO:0008595">
    <property type="term" value="P:anterior/posterior axis specification, embryo"/>
    <property type="evidence" value="ECO:0000315"/>
    <property type="project" value="MGI"/>
</dbReference>
<dbReference type="GO" id="GO:0048319">
    <property type="term" value="P:axial mesoderm morphogenesis"/>
    <property type="evidence" value="ECO:0000315"/>
    <property type="project" value="MGI"/>
</dbReference>
<dbReference type="GO" id="GO:0045892">
    <property type="term" value="P:negative regulation of DNA-templated transcription"/>
    <property type="evidence" value="ECO:0000314"/>
    <property type="project" value="MGI"/>
</dbReference>
<dbReference type="GO" id="GO:0045944">
    <property type="term" value="P:positive regulation of transcription by RNA polymerase II"/>
    <property type="evidence" value="ECO:0000314"/>
    <property type="project" value="MGI"/>
</dbReference>
<dbReference type="GO" id="GO:1904672">
    <property type="term" value="P:regulation of somatic stem cell population maintenance"/>
    <property type="evidence" value="ECO:0000315"/>
    <property type="project" value="MGI"/>
</dbReference>
<dbReference type="GO" id="GO:2000036">
    <property type="term" value="P:regulation of stem cell population maintenance"/>
    <property type="evidence" value="ECO:0000315"/>
    <property type="project" value="MGI"/>
</dbReference>
<dbReference type="GO" id="GO:0043588">
    <property type="term" value="P:skin development"/>
    <property type="evidence" value="ECO:0000316"/>
    <property type="project" value="MGI"/>
</dbReference>
<dbReference type="GO" id="GO:0035019">
    <property type="term" value="P:somatic stem cell population maintenance"/>
    <property type="evidence" value="ECO:0000316"/>
    <property type="project" value="MGI"/>
</dbReference>
<dbReference type="GO" id="GO:0048863">
    <property type="term" value="P:stem cell differentiation"/>
    <property type="evidence" value="ECO:0000315"/>
    <property type="project" value="MGI"/>
</dbReference>
<dbReference type="GO" id="GO:0006366">
    <property type="term" value="P:transcription by RNA polymerase II"/>
    <property type="evidence" value="ECO:0000314"/>
    <property type="project" value="MGI"/>
</dbReference>
<dbReference type="GO" id="GO:0016055">
    <property type="term" value="P:Wnt signaling pathway"/>
    <property type="evidence" value="ECO:0007669"/>
    <property type="project" value="UniProtKB-KW"/>
</dbReference>
<dbReference type="CDD" id="cd21996">
    <property type="entry name" value="HMG-box_TCF7-like"/>
    <property type="match status" value="1"/>
</dbReference>
<dbReference type="FunFam" id="1.10.30.10:FF:000001">
    <property type="entry name" value="transcription factor 7 isoform X2"/>
    <property type="match status" value="1"/>
</dbReference>
<dbReference type="FunFam" id="4.10.900.10:FF:000002">
    <property type="entry name" value="transcription factor 7-like 2 isoform X1"/>
    <property type="match status" value="1"/>
</dbReference>
<dbReference type="Gene3D" id="1.10.30.10">
    <property type="entry name" value="High mobility group box domain"/>
    <property type="match status" value="1"/>
</dbReference>
<dbReference type="Gene3D" id="4.10.900.10">
    <property type="entry name" value="TCF3-CBD (Catenin binding domain)"/>
    <property type="match status" value="1"/>
</dbReference>
<dbReference type="InterPro" id="IPR027397">
    <property type="entry name" value="Catenin-bd_sf"/>
</dbReference>
<dbReference type="InterPro" id="IPR013558">
    <property type="entry name" value="CTNNB1-bd_N"/>
</dbReference>
<dbReference type="InterPro" id="IPR009071">
    <property type="entry name" value="HMG_box_dom"/>
</dbReference>
<dbReference type="InterPro" id="IPR036910">
    <property type="entry name" value="HMG_box_dom_sf"/>
</dbReference>
<dbReference type="InterPro" id="IPR024940">
    <property type="entry name" value="TCF/LEF"/>
</dbReference>
<dbReference type="PANTHER" id="PTHR10373">
    <property type="entry name" value="TRANSCRIPTION FACTOR 7 FAMILY MEMBER"/>
    <property type="match status" value="1"/>
</dbReference>
<dbReference type="PANTHER" id="PTHR10373:SF25">
    <property type="entry name" value="TRANSCRIPTION FACTOR 7-LIKE 1"/>
    <property type="match status" value="1"/>
</dbReference>
<dbReference type="Pfam" id="PF08347">
    <property type="entry name" value="CTNNB1_binding"/>
    <property type="match status" value="1"/>
</dbReference>
<dbReference type="Pfam" id="PF00505">
    <property type="entry name" value="HMG_box"/>
    <property type="match status" value="1"/>
</dbReference>
<dbReference type="SMART" id="SM00398">
    <property type="entry name" value="HMG"/>
    <property type="match status" value="1"/>
</dbReference>
<dbReference type="SUPFAM" id="SSF47095">
    <property type="entry name" value="HMG-box"/>
    <property type="match status" value="1"/>
</dbReference>
<dbReference type="PROSITE" id="PS50118">
    <property type="entry name" value="HMG_BOX_2"/>
    <property type="match status" value="1"/>
</dbReference>
<reference key="1">
    <citation type="journal article" date="1998" name="Mol. Cell. Biol.">
        <title>Two members of the Tcf family implicated in Wnt/b-catenin signaling during embryogenesis in the mouse.</title>
        <authorList>
            <person name="Korinek V."/>
            <person name="Barker N."/>
            <person name="Willert K."/>
            <person name="Molenaar M."/>
            <person name="Roose J."/>
            <person name="Wagenaar G."/>
            <person name="Markman M."/>
            <person name="Lamers W."/>
            <person name="Destree O."/>
            <person name="Clevers H."/>
        </authorList>
    </citation>
    <scope>NUCLEOTIDE SEQUENCE [MRNA]</scope>
    <scope>INTERACTION WITH CTNNB1</scope>
    <source>
        <strain>C57BL/6J</strain>
        <tissue>Embryo</tissue>
    </source>
</reference>
<reference key="2">
    <citation type="submission" date="1998-01" db="EMBL/GenBank/DDBJ databases">
        <title>Cloning of murine Tcf-3: a possible role in muscle development.</title>
        <authorList>
            <person name="Melchionna R."/>
            <person name="Murphy P."/>
            <person name="La Valle R."/>
            <person name="Borello U."/>
            <person name="Cossu G."/>
        </authorList>
    </citation>
    <scope>NUCLEOTIDE SEQUENCE [MRNA] OF 28-584</scope>
    <source>
        <strain>CD-1</strain>
        <tissue>Limb</tissue>
    </source>
</reference>
<reference key="3">
    <citation type="submission" date="1998-04" db="EMBL/GenBank/DDBJ databases">
        <title>Partial mRNA sequence of mouse transcription factor mTCF-3.</title>
        <authorList>
            <person name="Sussman D.J."/>
        </authorList>
    </citation>
    <scope>NUCLEOTIDE SEQUENCE [MRNA] OF 173-584</scope>
</reference>
<reference key="4">
    <citation type="journal article" date="1999" name="Development">
        <title>Multiple roles for activated LEF/TCF transcription complexes during hair follicle development and differentiation.</title>
        <authorList>
            <person name="DasGupta R."/>
            <person name="Fuchs E."/>
        </authorList>
    </citation>
    <scope>TISSUE SPECIFICITY</scope>
</reference>
<reference key="5">
    <citation type="journal article" date="2001" name="Genes Dev.">
        <title>Tcf3 and Lef1 regulate lineage differentiation of multipotent stem cells in skin.</title>
        <authorList>
            <person name="Merrill B.J."/>
            <person name="Gat U."/>
            <person name="DasGupta R."/>
            <person name="Fuchs E."/>
        </authorList>
    </citation>
    <scope>FUNCTION</scope>
    <scope>MUTAGENESIS OF LEU-383 AND PRO-407</scope>
</reference>
<comment type="function">
    <text evidence="7">Participates in the Wnt signaling pathway. Binds to DNA and acts as a repressor in the absence of CTNNB1, and as an activator in its presence. Necessary for the terminal differentiation of epidermal cells, the formation of keratohyalin granules and the development of the barrier function of the epidermis.</text>
</comment>
<comment type="subunit">
    <text evidence="2 8">Binds the armadillo repeat of CTNNB1 and forms a stable complex (PubMed:9488439). Interacts with DAZAP2 (By similarity).</text>
</comment>
<comment type="subcellular location">
    <subcellularLocation>
        <location>Nucleus</location>
    </subcellularLocation>
</comment>
<comment type="tissue specificity">
    <text evidence="6">Detected in the basal layer of epidermis and in outer root sheath and bulge of hair follicles.</text>
</comment>
<comment type="domain">
    <text>The putative Groucho interaction domain between the N-terminal CTNNB1 binding domain and the HMG-box is necessary for repression of the transactivation mediated by TCF7L1 and CTNNB1.</text>
</comment>
<comment type="similarity">
    <text evidence="9">Belongs to the TCF/LEF family.</text>
</comment>
<keyword id="KW-0010">Activator</keyword>
<keyword id="KW-0238">DNA-binding</keyword>
<keyword id="KW-0539">Nucleus</keyword>
<keyword id="KW-1185">Reference proteome</keyword>
<keyword id="KW-0678">Repressor</keyword>
<keyword id="KW-0804">Transcription</keyword>
<keyword id="KW-0805">Transcription regulation</keyword>
<keyword id="KW-0879">Wnt signaling pathway</keyword>
<evidence type="ECO:0000250" key="1"/>
<evidence type="ECO:0000250" key="2">
    <source>
        <dbReference type="UniProtKB" id="Q9HCS4"/>
    </source>
</evidence>
<evidence type="ECO:0000255" key="3"/>
<evidence type="ECO:0000255" key="4">
    <source>
        <dbReference type="PROSITE-ProRule" id="PRU00267"/>
    </source>
</evidence>
<evidence type="ECO:0000256" key="5">
    <source>
        <dbReference type="SAM" id="MobiDB-lite"/>
    </source>
</evidence>
<evidence type="ECO:0000269" key="6">
    <source>
    </source>
</evidence>
<evidence type="ECO:0000269" key="7">
    <source>
    </source>
</evidence>
<evidence type="ECO:0000269" key="8">
    <source>
    </source>
</evidence>
<evidence type="ECO:0000305" key="9"/>
<name>TF7L1_MOUSE</name>